<name>BECN1_DROME</name>
<accession>Q9VCE1</accession>
<proteinExistence type="evidence at protein level"/>
<keyword id="KW-0175">Coiled coil</keyword>
<keyword id="KW-1185">Reference proteome</keyword>
<gene>
    <name evidence="5 7" type="primary">Atg6</name>
    <name evidence="7" type="ORF">CG5429</name>
</gene>
<evidence type="ECO:0000250" key="1">
    <source>
        <dbReference type="UniProtKB" id="Q14457"/>
    </source>
</evidence>
<evidence type="ECO:0000255" key="2"/>
<evidence type="ECO:0000256" key="3">
    <source>
        <dbReference type="SAM" id="MobiDB-lite"/>
    </source>
</evidence>
<evidence type="ECO:0000269" key="4">
    <source>
    </source>
</evidence>
<evidence type="ECO:0000303" key="5">
    <source>
    </source>
</evidence>
<evidence type="ECO:0000305" key="6"/>
<evidence type="ECO:0000312" key="7">
    <source>
        <dbReference type="FlyBase" id="FBgn0264325"/>
    </source>
</evidence>
<feature type="chain" id="PRO_0000218557" description="Beclin-1-like protein">
    <location>
        <begin position="1"/>
        <end position="422"/>
    </location>
</feature>
<feature type="region of interest" description="Disordered" evidence="3">
    <location>
        <begin position="182"/>
        <end position="201"/>
    </location>
</feature>
<feature type="coiled-coil region" evidence="2">
    <location>
        <begin position="119"/>
        <end position="243"/>
    </location>
</feature>
<dbReference type="EMBL" id="AE014297">
    <property type="protein sequence ID" value="AAF56227.1"/>
    <property type="molecule type" value="Genomic_DNA"/>
</dbReference>
<dbReference type="EMBL" id="AY061424">
    <property type="protein sequence ID" value="AAL28972.1"/>
    <property type="molecule type" value="mRNA"/>
</dbReference>
<dbReference type="RefSeq" id="NP_651209.1">
    <property type="nucleotide sequence ID" value="NM_142952.3"/>
</dbReference>
<dbReference type="SMR" id="Q9VCE1"/>
<dbReference type="BioGRID" id="67784">
    <property type="interactions" value="14"/>
</dbReference>
<dbReference type="ComplexPortal" id="CPX-2744">
    <property type="entry name" value="Phosphatidylinositol 3-kinase complex, class III, ATG14 variant"/>
</dbReference>
<dbReference type="DIP" id="DIP-22026N"/>
<dbReference type="FunCoup" id="Q9VCE1">
    <property type="interactions" value="1518"/>
</dbReference>
<dbReference type="IntAct" id="Q9VCE1">
    <property type="interactions" value="2"/>
</dbReference>
<dbReference type="STRING" id="7227.FBpp0083975"/>
<dbReference type="PaxDb" id="7227-FBpp0083975"/>
<dbReference type="DNASU" id="42850"/>
<dbReference type="EnsemblMetazoa" id="FBtr0084590">
    <property type="protein sequence ID" value="FBpp0083975"/>
    <property type="gene ID" value="FBgn0264325"/>
</dbReference>
<dbReference type="GeneID" id="42850"/>
<dbReference type="KEGG" id="dme:Dmel_CG5429"/>
<dbReference type="AGR" id="FB:FBgn0264325"/>
<dbReference type="CTD" id="42850"/>
<dbReference type="FlyBase" id="FBgn0264325">
    <property type="gene designation" value="Atg6"/>
</dbReference>
<dbReference type="VEuPathDB" id="VectorBase:FBgn0264325"/>
<dbReference type="eggNOG" id="KOG2751">
    <property type="taxonomic scope" value="Eukaryota"/>
</dbReference>
<dbReference type="GeneTree" id="ENSGT00390000008164"/>
<dbReference type="HOGENOM" id="CLU_024219_4_1_1"/>
<dbReference type="InParanoid" id="Q9VCE1"/>
<dbReference type="OMA" id="EWDVYKA"/>
<dbReference type="OrthoDB" id="20368at2759"/>
<dbReference type="PhylomeDB" id="Q9VCE1"/>
<dbReference type="Reactome" id="R-DME-1169408">
    <property type="pathway name" value="ISG15 antiviral mechanism"/>
</dbReference>
<dbReference type="Reactome" id="R-DME-1632852">
    <property type="pathway name" value="Macroautophagy"/>
</dbReference>
<dbReference type="Reactome" id="R-DME-5689880">
    <property type="pathway name" value="Ub-specific processing proteases"/>
</dbReference>
<dbReference type="BioGRID-ORCS" id="42850">
    <property type="hits" value="0 hits in 3 CRISPR screens"/>
</dbReference>
<dbReference type="GenomeRNAi" id="42850"/>
<dbReference type="PRO" id="PR:Q9VCE1"/>
<dbReference type="Proteomes" id="UP000000803">
    <property type="component" value="Chromosome 3R"/>
</dbReference>
<dbReference type="Bgee" id="FBgn0264325">
    <property type="expression patterns" value="Expressed in oviduct (Drosophila) and 81 other cell types or tissues"/>
</dbReference>
<dbReference type="GO" id="GO:0000407">
    <property type="term" value="C:phagophore assembly site"/>
    <property type="evidence" value="ECO:0000318"/>
    <property type="project" value="GO_Central"/>
</dbReference>
<dbReference type="GO" id="GO:0034271">
    <property type="term" value="C:phosphatidylinositol 3-kinase complex, class III, type I"/>
    <property type="evidence" value="ECO:0000314"/>
    <property type="project" value="FlyBase"/>
</dbReference>
<dbReference type="GO" id="GO:0034272">
    <property type="term" value="C:phosphatidylinositol 3-kinase complex, class III, type II"/>
    <property type="evidence" value="ECO:0000318"/>
    <property type="project" value="GO_Central"/>
</dbReference>
<dbReference type="GO" id="GO:0043548">
    <property type="term" value="F:phosphatidylinositol 3-kinase binding"/>
    <property type="evidence" value="ECO:0000318"/>
    <property type="project" value="GO_Central"/>
</dbReference>
<dbReference type="GO" id="GO:0030674">
    <property type="term" value="F:protein-macromolecule adaptor activity"/>
    <property type="evidence" value="ECO:0000318"/>
    <property type="project" value="GO_Central"/>
</dbReference>
<dbReference type="GO" id="GO:0031267">
    <property type="term" value="F:small GTPase binding"/>
    <property type="evidence" value="ECO:0000314"/>
    <property type="project" value="FlyBase"/>
</dbReference>
<dbReference type="GO" id="GO:0000045">
    <property type="term" value="P:autophagosome assembly"/>
    <property type="evidence" value="ECO:0000318"/>
    <property type="project" value="GO_Central"/>
</dbReference>
<dbReference type="GO" id="GO:0006914">
    <property type="term" value="P:autophagy"/>
    <property type="evidence" value="ECO:0000315"/>
    <property type="project" value="FlyBase"/>
</dbReference>
<dbReference type="GO" id="GO:0006995">
    <property type="term" value="P:cellular response to nitrogen starvation"/>
    <property type="evidence" value="ECO:0000318"/>
    <property type="project" value="GO_Central"/>
</dbReference>
<dbReference type="GO" id="GO:0009267">
    <property type="term" value="P:cellular response to starvation"/>
    <property type="evidence" value="ECO:0000315"/>
    <property type="project" value="FlyBase"/>
</dbReference>
<dbReference type="GO" id="GO:0050829">
    <property type="term" value="P:defense response to Gram-negative bacterium"/>
    <property type="evidence" value="ECO:0007001"/>
    <property type="project" value="FlyBase"/>
</dbReference>
<dbReference type="GO" id="GO:0006897">
    <property type="term" value="P:endocytosis"/>
    <property type="evidence" value="ECO:0000315"/>
    <property type="project" value="FlyBase"/>
</dbReference>
<dbReference type="GO" id="GO:0061723">
    <property type="term" value="P:glycophagy"/>
    <property type="evidence" value="ECO:0000315"/>
    <property type="project" value="FlyBase"/>
</dbReference>
<dbReference type="GO" id="GO:0030097">
    <property type="term" value="P:hemopoiesis"/>
    <property type="evidence" value="ECO:0000315"/>
    <property type="project" value="FlyBase"/>
</dbReference>
<dbReference type="GO" id="GO:0035096">
    <property type="term" value="P:larval midgut cell programmed cell death"/>
    <property type="evidence" value="ECO:0000315"/>
    <property type="project" value="FlyBase"/>
</dbReference>
<dbReference type="GO" id="GO:0045324">
    <property type="term" value="P:late endosome to vacuole transport"/>
    <property type="evidence" value="ECO:0000318"/>
    <property type="project" value="GO_Central"/>
</dbReference>
<dbReference type="GO" id="GO:0016236">
    <property type="term" value="P:macroautophagy"/>
    <property type="evidence" value="ECO:0000315"/>
    <property type="project" value="FlyBase"/>
</dbReference>
<dbReference type="GO" id="GO:0000423">
    <property type="term" value="P:mitophagy"/>
    <property type="evidence" value="ECO:0000318"/>
    <property type="project" value="GO_Central"/>
</dbReference>
<dbReference type="GO" id="GO:0045824">
    <property type="term" value="P:negative regulation of innate immune response"/>
    <property type="evidence" value="ECO:0007001"/>
    <property type="project" value="FlyBase"/>
</dbReference>
<dbReference type="GO" id="GO:0016322">
    <property type="term" value="P:neuron remodeling"/>
    <property type="evidence" value="ECO:0000315"/>
    <property type="project" value="FlyBase"/>
</dbReference>
<dbReference type="GO" id="GO:0009306">
    <property type="term" value="P:protein secretion"/>
    <property type="evidence" value="ECO:0000315"/>
    <property type="project" value="FlyBase"/>
</dbReference>
<dbReference type="GO" id="GO:0006979">
    <property type="term" value="P:response to oxidative stress"/>
    <property type="evidence" value="ECO:0000315"/>
    <property type="project" value="FlyBase"/>
</dbReference>
<dbReference type="FunFam" id="1.10.418.40:FF:000001">
    <property type="entry name" value="beclin-1 isoform X1"/>
    <property type="match status" value="1"/>
</dbReference>
<dbReference type="Gene3D" id="6.10.250.3110">
    <property type="match status" value="1"/>
</dbReference>
<dbReference type="Gene3D" id="1.10.418.40">
    <property type="entry name" value="Autophagy protein 6/Beclin 1"/>
    <property type="match status" value="1"/>
</dbReference>
<dbReference type="InterPro" id="IPR007243">
    <property type="entry name" value="Atg6/Beclin"/>
</dbReference>
<dbReference type="InterPro" id="IPR038274">
    <property type="entry name" value="Atg6/Beclin_C_sf"/>
</dbReference>
<dbReference type="InterPro" id="IPR041691">
    <property type="entry name" value="Atg6/beclin_CC"/>
</dbReference>
<dbReference type="InterPro" id="IPR040455">
    <property type="entry name" value="Atg6_BARA"/>
</dbReference>
<dbReference type="PANTHER" id="PTHR12768">
    <property type="entry name" value="BECLIN 1"/>
    <property type="match status" value="1"/>
</dbReference>
<dbReference type="PANTHER" id="PTHR12768:SF4">
    <property type="entry name" value="BECLIN-1"/>
    <property type="match status" value="1"/>
</dbReference>
<dbReference type="Pfam" id="PF04111">
    <property type="entry name" value="APG6"/>
    <property type="match status" value="1"/>
</dbReference>
<dbReference type="Pfam" id="PF17675">
    <property type="entry name" value="APG6_N"/>
    <property type="match status" value="1"/>
</dbReference>
<comment type="function">
    <text evidence="1">Plays a central role in autophagy.</text>
</comment>
<comment type="subunit">
    <text evidence="4">Interacts with Rab18, preferentially binding to the GTP-bound form.</text>
</comment>
<comment type="interaction">
    <interactant intactId="EBI-134130">
        <id>Q9VCE1</id>
    </interactant>
    <interactant intactId="EBI-174806">
        <id>O18413</id>
        <label>Rpt6</label>
    </interactant>
    <organismsDiffer>false</organismsDiffer>
    <experiments>3</experiments>
</comment>
<comment type="similarity">
    <text evidence="6">Belongs to the beclin family.</text>
</comment>
<organism>
    <name type="scientific">Drosophila melanogaster</name>
    <name type="common">Fruit fly</name>
    <dbReference type="NCBI Taxonomy" id="7227"/>
    <lineage>
        <taxon>Eukaryota</taxon>
        <taxon>Metazoa</taxon>
        <taxon>Ecdysozoa</taxon>
        <taxon>Arthropoda</taxon>
        <taxon>Hexapoda</taxon>
        <taxon>Insecta</taxon>
        <taxon>Pterygota</taxon>
        <taxon>Neoptera</taxon>
        <taxon>Endopterygota</taxon>
        <taxon>Diptera</taxon>
        <taxon>Brachycera</taxon>
        <taxon>Muscomorpha</taxon>
        <taxon>Ephydroidea</taxon>
        <taxon>Drosophilidae</taxon>
        <taxon>Drosophila</taxon>
        <taxon>Sophophora</taxon>
    </lineage>
</organism>
<protein>
    <recommendedName>
        <fullName evidence="6">Beclin-1-like protein</fullName>
    </recommendedName>
    <alternativeName>
        <fullName evidence="5">Autophagy protein 6-like</fullName>
        <shortName evidence="5">APG6-like</shortName>
    </alternativeName>
</protein>
<sequence>MSEAEKQAVSFACQRCLQPIVLDEQLEKISVHAMAELSLPIYGDNGNTLDPQDASSFDHFVPPYRLTDSINGTGFMLVSDGRDNKKMSAAFKLKAELFDCLSSNSEIDHPLCEECADSMLEIMDRELRIAEDEWDVYKAYLDELEQQRVAPNVEALDKELDELKRSEQQLLSELKELKKEEQSLNDAIAEEEQEREELHEQEESYWREYTKHRRELMLTEDDKRSLECQIAYSKQQLDKLRDTNIFNITFHIWHAGHFGTINNFRLGRLPSVSVDWSEINAAWGQTVLLLSALARKIGLTFERYRVVPFGNHSYVEVLGENRELPLYGSGGFKFFWDTKFDAAMVAFLDCLTQFQKEVEKRDTEFLLPYKMEKGKIIDPSTGNSYSIKIQFNSEEQWTKALKFMLTNLKWGLAWVSSQFVSP</sequence>
<reference key="1">
    <citation type="journal article" date="2000" name="Science">
        <title>The genome sequence of Drosophila melanogaster.</title>
        <authorList>
            <person name="Adams M.D."/>
            <person name="Celniker S.E."/>
            <person name="Holt R.A."/>
            <person name="Evans C.A."/>
            <person name="Gocayne J.D."/>
            <person name="Amanatides P.G."/>
            <person name="Scherer S.E."/>
            <person name="Li P.W."/>
            <person name="Hoskins R.A."/>
            <person name="Galle R.F."/>
            <person name="George R.A."/>
            <person name="Lewis S.E."/>
            <person name="Richards S."/>
            <person name="Ashburner M."/>
            <person name="Henderson S.N."/>
            <person name="Sutton G.G."/>
            <person name="Wortman J.R."/>
            <person name="Yandell M.D."/>
            <person name="Zhang Q."/>
            <person name="Chen L.X."/>
            <person name="Brandon R.C."/>
            <person name="Rogers Y.-H.C."/>
            <person name="Blazej R.G."/>
            <person name="Champe M."/>
            <person name="Pfeiffer B.D."/>
            <person name="Wan K.H."/>
            <person name="Doyle C."/>
            <person name="Baxter E.G."/>
            <person name="Helt G."/>
            <person name="Nelson C.R."/>
            <person name="Miklos G.L.G."/>
            <person name="Abril J.F."/>
            <person name="Agbayani A."/>
            <person name="An H.-J."/>
            <person name="Andrews-Pfannkoch C."/>
            <person name="Baldwin D."/>
            <person name="Ballew R.M."/>
            <person name="Basu A."/>
            <person name="Baxendale J."/>
            <person name="Bayraktaroglu L."/>
            <person name="Beasley E.M."/>
            <person name="Beeson K.Y."/>
            <person name="Benos P.V."/>
            <person name="Berman B.P."/>
            <person name="Bhandari D."/>
            <person name="Bolshakov S."/>
            <person name="Borkova D."/>
            <person name="Botchan M.R."/>
            <person name="Bouck J."/>
            <person name="Brokstein P."/>
            <person name="Brottier P."/>
            <person name="Burtis K.C."/>
            <person name="Busam D.A."/>
            <person name="Butler H."/>
            <person name="Cadieu E."/>
            <person name="Center A."/>
            <person name="Chandra I."/>
            <person name="Cherry J.M."/>
            <person name="Cawley S."/>
            <person name="Dahlke C."/>
            <person name="Davenport L.B."/>
            <person name="Davies P."/>
            <person name="de Pablos B."/>
            <person name="Delcher A."/>
            <person name="Deng Z."/>
            <person name="Mays A.D."/>
            <person name="Dew I."/>
            <person name="Dietz S.M."/>
            <person name="Dodson K."/>
            <person name="Doup L.E."/>
            <person name="Downes M."/>
            <person name="Dugan-Rocha S."/>
            <person name="Dunkov B.C."/>
            <person name="Dunn P."/>
            <person name="Durbin K.J."/>
            <person name="Evangelista C.C."/>
            <person name="Ferraz C."/>
            <person name="Ferriera S."/>
            <person name="Fleischmann W."/>
            <person name="Fosler C."/>
            <person name="Gabrielian A.E."/>
            <person name="Garg N.S."/>
            <person name="Gelbart W.M."/>
            <person name="Glasser K."/>
            <person name="Glodek A."/>
            <person name="Gong F."/>
            <person name="Gorrell J.H."/>
            <person name="Gu Z."/>
            <person name="Guan P."/>
            <person name="Harris M."/>
            <person name="Harris N.L."/>
            <person name="Harvey D.A."/>
            <person name="Heiman T.J."/>
            <person name="Hernandez J.R."/>
            <person name="Houck J."/>
            <person name="Hostin D."/>
            <person name="Houston K.A."/>
            <person name="Howland T.J."/>
            <person name="Wei M.-H."/>
            <person name="Ibegwam C."/>
            <person name="Jalali M."/>
            <person name="Kalush F."/>
            <person name="Karpen G.H."/>
            <person name="Ke Z."/>
            <person name="Kennison J.A."/>
            <person name="Ketchum K.A."/>
            <person name="Kimmel B.E."/>
            <person name="Kodira C.D."/>
            <person name="Kraft C.L."/>
            <person name="Kravitz S."/>
            <person name="Kulp D."/>
            <person name="Lai Z."/>
            <person name="Lasko P."/>
            <person name="Lei Y."/>
            <person name="Levitsky A.A."/>
            <person name="Li J.H."/>
            <person name="Li Z."/>
            <person name="Liang Y."/>
            <person name="Lin X."/>
            <person name="Liu X."/>
            <person name="Mattei B."/>
            <person name="McIntosh T.C."/>
            <person name="McLeod M.P."/>
            <person name="McPherson D."/>
            <person name="Merkulov G."/>
            <person name="Milshina N.V."/>
            <person name="Mobarry C."/>
            <person name="Morris J."/>
            <person name="Moshrefi A."/>
            <person name="Mount S.M."/>
            <person name="Moy M."/>
            <person name="Murphy B."/>
            <person name="Murphy L."/>
            <person name="Muzny D.M."/>
            <person name="Nelson D.L."/>
            <person name="Nelson D.R."/>
            <person name="Nelson K.A."/>
            <person name="Nixon K."/>
            <person name="Nusskern D.R."/>
            <person name="Pacleb J.M."/>
            <person name="Palazzolo M."/>
            <person name="Pittman G.S."/>
            <person name="Pan S."/>
            <person name="Pollard J."/>
            <person name="Puri V."/>
            <person name="Reese M.G."/>
            <person name="Reinert K."/>
            <person name="Remington K."/>
            <person name="Saunders R.D.C."/>
            <person name="Scheeler F."/>
            <person name="Shen H."/>
            <person name="Shue B.C."/>
            <person name="Siden-Kiamos I."/>
            <person name="Simpson M."/>
            <person name="Skupski M.P."/>
            <person name="Smith T.J."/>
            <person name="Spier E."/>
            <person name="Spradling A.C."/>
            <person name="Stapleton M."/>
            <person name="Strong R."/>
            <person name="Sun E."/>
            <person name="Svirskas R."/>
            <person name="Tector C."/>
            <person name="Turner R."/>
            <person name="Venter E."/>
            <person name="Wang A.H."/>
            <person name="Wang X."/>
            <person name="Wang Z.-Y."/>
            <person name="Wassarman D.A."/>
            <person name="Weinstock G.M."/>
            <person name="Weissenbach J."/>
            <person name="Williams S.M."/>
            <person name="Woodage T."/>
            <person name="Worley K.C."/>
            <person name="Wu D."/>
            <person name="Yang S."/>
            <person name="Yao Q.A."/>
            <person name="Ye J."/>
            <person name="Yeh R.-F."/>
            <person name="Zaveri J.S."/>
            <person name="Zhan M."/>
            <person name="Zhang G."/>
            <person name="Zhao Q."/>
            <person name="Zheng L."/>
            <person name="Zheng X.H."/>
            <person name="Zhong F.N."/>
            <person name="Zhong W."/>
            <person name="Zhou X."/>
            <person name="Zhu S.C."/>
            <person name="Zhu X."/>
            <person name="Smith H.O."/>
            <person name="Gibbs R.A."/>
            <person name="Myers E.W."/>
            <person name="Rubin G.M."/>
            <person name="Venter J.C."/>
        </authorList>
    </citation>
    <scope>NUCLEOTIDE SEQUENCE [LARGE SCALE GENOMIC DNA]</scope>
    <source>
        <strain>Berkeley</strain>
    </source>
</reference>
<reference key="2">
    <citation type="journal article" date="2002" name="Genome Biol.">
        <title>Annotation of the Drosophila melanogaster euchromatic genome: a systematic review.</title>
        <authorList>
            <person name="Misra S."/>
            <person name="Crosby M.A."/>
            <person name="Mungall C.J."/>
            <person name="Matthews B.B."/>
            <person name="Campbell K.S."/>
            <person name="Hradecky P."/>
            <person name="Huang Y."/>
            <person name="Kaminker J.S."/>
            <person name="Millburn G.H."/>
            <person name="Prochnik S.E."/>
            <person name="Smith C.D."/>
            <person name="Tupy J.L."/>
            <person name="Whitfield E.J."/>
            <person name="Bayraktaroglu L."/>
            <person name="Berman B.P."/>
            <person name="Bettencourt B.R."/>
            <person name="Celniker S.E."/>
            <person name="de Grey A.D.N.J."/>
            <person name="Drysdale R.A."/>
            <person name="Harris N.L."/>
            <person name="Richter J."/>
            <person name="Russo S."/>
            <person name="Schroeder A.J."/>
            <person name="Shu S.Q."/>
            <person name="Stapleton M."/>
            <person name="Yamada C."/>
            <person name="Ashburner M."/>
            <person name="Gelbart W.M."/>
            <person name="Rubin G.M."/>
            <person name="Lewis S.E."/>
        </authorList>
    </citation>
    <scope>GENOME REANNOTATION</scope>
    <source>
        <strain>Berkeley</strain>
    </source>
</reference>
<reference key="3">
    <citation type="journal article" date="2002" name="Genome Biol.">
        <title>A Drosophila full-length cDNA resource.</title>
        <authorList>
            <person name="Stapleton M."/>
            <person name="Carlson J.W."/>
            <person name="Brokstein P."/>
            <person name="Yu C."/>
            <person name="Champe M."/>
            <person name="George R.A."/>
            <person name="Guarin H."/>
            <person name="Kronmiller B."/>
            <person name="Pacleb J.M."/>
            <person name="Park S."/>
            <person name="Wan K.H."/>
            <person name="Rubin G.M."/>
            <person name="Celniker S.E."/>
        </authorList>
    </citation>
    <scope>NUCLEOTIDE SEQUENCE [LARGE SCALE MRNA]</scope>
    <source>
        <strain>Berkeley</strain>
    </source>
</reference>
<reference key="4">
    <citation type="journal article" date="2021" name="FEBS J.">
        <title>The Warburg Micro Syndrome-associated Rab3GAP-Rab18 module promotes autolysosome maturation through the Vps34 Complex I.</title>
        <authorList>
            <person name="Takats S."/>
            <person name="Levay L."/>
            <person name="Boda A."/>
            <person name="Toth S."/>
            <person name="Simon-Vecsei Z."/>
            <person name="Rubics A."/>
            <person name="Varga A."/>
            <person name="Lippai M."/>
            <person name="Lorincz P."/>
            <person name="Glatz G."/>
            <person name="Juhasz G."/>
        </authorList>
    </citation>
    <scope>INTERACTION WITH RAB18</scope>
</reference>